<dbReference type="EMBL" id="CP000764">
    <property type="protein sequence ID" value="ABS22398.1"/>
    <property type="molecule type" value="Genomic_DNA"/>
</dbReference>
<dbReference type="RefSeq" id="WP_012094592.1">
    <property type="nucleotide sequence ID" value="NC_009674.1"/>
</dbReference>
<dbReference type="SMR" id="A7GQJ0"/>
<dbReference type="STRING" id="315749.Bcer98_2136"/>
<dbReference type="GeneID" id="33897423"/>
<dbReference type="KEGG" id="bcy:Bcer98_2136"/>
<dbReference type="eggNOG" id="COG4843">
    <property type="taxonomic scope" value="Bacteria"/>
</dbReference>
<dbReference type="HOGENOM" id="CLU_106166_1_1_9"/>
<dbReference type="OrthoDB" id="48231at2"/>
<dbReference type="Proteomes" id="UP000002300">
    <property type="component" value="Chromosome"/>
</dbReference>
<dbReference type="GO" id="GO:0005886">
    <property type="term" value="C:plasma membrane"/>
    <property type="evidence" value="ECO:0007669"/>
    <property type="project" value="UniProtKB-SubCell"/>
</dbReference>
<dbReference type="CDD" id="cd16381">
    <property type="entry name" value="YitT_C_like_1"/>
    <property type="match status" value="1"/>
</dbReference>
<dbReference type="HAMAP" id="MF_01515">
    <property type="entry name" value="UPF0316"/>
    <property type="match status" value="1"/>
</dbReference>
<dbReference type="InterPro" id="IPR019264">
    <property type="entry name" value="DUF2179"/>
</dbReference>
<dbReference type="InterPro" id="IPR044035">
    <property type="entry name" value="DUF5698"/>
</dbReference>
<dbReference type="InterPro" id="IPR022930">
    <property type="entry name" value="UPF0316"/>
</dbReference>
<dbReference type="NCBIfam" id="NF003193">
    <property type="entry name" value="PRK04164.1-4"/>
    <property type="match status" value="1"/>
</dbReference>
<dbReference type="NCBIfam" id="NF003194">
    <property type="entry name" value="PRK04164.1-5"/>
    <property type="match status" value="1"/>
</dbReference>
<dbReference type="PANTHER" id="PTHR40060">
    <property type="entry name" value="UPF0316 PROTEIN YEBE"/>
    <property type="match status" value="1"/>
</dbReference>
<dbReference type="PANTHER" id="PTHR40060:SF1">
    <property type="entry name" value="UPF0316 PROTEIN YEBE"/>
    <property type="match status" value="1"/>
</dbReference>
<dbReference type="Pfam" id="PF10035">
    <property type="entry name" value="DUF2179"/>
    <property type="match status" value="1"/>
</dbReference>
<dbReference type="Pfam" id="PF18955">
    <property type="entry name" value="DUF5698"/>
    <property type="match status" value="1"/>
</dbReference>
<reference key="1">
    <citation type="journal article" date="2008" name="Chem. Biol. Interact.">
        <title>Extending the Bacillus cereus group genomics to putative food-borne pathogens of different toxicity.</title>
        <authorList>
            <person name="Lapidus A."/>
            <person name="Goltsman E."/>
            <person name="Auger S."/>
            <person name="Galleron N."/>
            <person name="Segurens B."/>
            <person name="Dossat C."/>
            <person name="Land M.L."/>
            <person name="Broussolle V."/>
            <person name="Brillard J."/>
            <person name="Guinebretiere M.-H."/>
            <person name="Sanchis V."/>
            <person name="Nguen-the C."/>
            <person name="Lereclus D."/>
            <person name="Richardson P."/>
            <person name="Wincker P."/>
            <person name="Weissenbach J."/>
            <person name="Ehrlich S.D."/>
            <person name="Sorokin A."/>
        </authorList>
    </citation>
    <scope>NUCLEOTIDE SEQUENCE [LARGE SCALE GENOMIC DNA]</scope>
    <source>
        <strain>DSM 22905 / CIP 110041 / 391-98 / NVH 391-98</strain>
    </source>
</reference>
<comment type="subcellular location">
    <subcellularLocation>
        <location evidence="1">Cell membrane</location>
        <topology evidence="1">Multi-pass membrane protein</topology>
    </subcellularLocation>
</comment>
<comment type="similarity">
    <text evidence="1">Belongs to the UPF0316 family.</text>
</comment>
<sequence length="181" mass="20305">MLQALLIFVLQIIYVPVLTIRTILLVKNQTRSAAGVGLLEGAIYIISLGIVFQDLSNWMNIVAYIIGFSAGLLLGGYIENKLAIGYITYHVSLLDRCNELVDELRNAGFGVTLFEGEGINSVRYRLDIVAKRSREQELLEIVNRIAPKAFMSSYEIRSFKGGYLTKAMKKRTLMKKKDHAS</sequence>
<organism>
    <name type="scientific">Bacillus cytotoxicus (strain DSM 22905 / CIP 110041 / 391-98 / NVH 391-98)</name>
    <dbReference type="NCBI Taxonomy" id="315749"/>
    <lineage>
        <taxon>Bacteria</taxon>
        <taxon>Bacillati</taxon>
        <taxon>Bacillota</taxon>
        <taxon>Bacilli</taxon>
        <taxon>Bacillales</taxon>
        <taxon>Bacillaceae</taxon>
        <taxon>Bacillus</taxon>
        <taxon>Bacillus cereus group</taxon>
    </lineage>
</organism>
<name>Y2136_BACCN</name>
<protein>
    <recommendedName>
        <fullName evidence="1">UPF0316 protein Bcer98_2136</fullName>
    </recommendedName>
</protein>
<keyword id="KW-1003">Cell membrane</keyword>
<keyword id="KW-0472">Membrane</keyword>
<keyword id="KW-0812">Transmembrane</keyword>
<keyword id="KW-1133">Transmembrane helix</keyword>
<feature type="chain" id="PRO_1000087530" description="UPF0316 protein Bcer98_2136">
    <location>
        <begin position="1"/>
        <end position="181"/>
    </location>
</feature>
<feature type="transmembrane region" description="Helical" evidence="1">
    <location>
        <begin position="6"/>
        <end position="26"/>
    </location>
</feature>
<feature type="transmembrane region" description="Helical" evidence="1">
    <location>
        <begin position="32"/>
        <end position="52"/>
    </location>
</feature>
<feature type="transmembrane region" description="Helical" evidence="1">
    <location>
        <begin position="58"/>
        <end position="78"/>
    </location>
</feature>
<accession>A7GQJ0</accession>
<proteinExistence type="inferred from homology"/>
<evidence type="ECO:0000255" key="1">
    <source>
        <dbReference type="HAMAP-Rule" id="MF_01515"/>
    </source>
</evidence>
<gene>
    <name type="ordered locus">Bcer98_2136</name>
</gene>